<name>PCH2_PIG</name>
<evidence type="ECO:0000250" key="1"/>
<evidence type="ECO:0000250" key="2">
    <source>
        <dbReference type="UniProtKB" id="Q15645"/>
    </source>
</evidence>
<evidence type="ECO:0000250" key="3">
    <source>
        <dbReference type="UniProtKB" id="Q3UA06"/>
    </source>
</evidence>
<evidence type="ECO:0000255" key="4"/>
<evidence type="ECO:0000305" key="5"/>
<reference key="1">
    <citation type="submission" date="2009-12" db="EMBL/GenBank/DDBJ databases">
        <authorList>
            <person name="Yg L."/>
        </authorList>
    </citation>
    <scope>NUCLEOTIDE SEQUENCE [LARGE SCALE MRNA]</scope>
</reference>
<accession>D3K5L7</accession>
<protein>
    <recommendedName>
        <fullName>Pachytene checkpoint protein 2 homolog</fullName>
    </recommendedName>
    <alternativeName>
        <fullName>Thyroid hormone receptor interactor 13</fullName>
    </alternativeName>
    <alternativeName>
        <fullName>Thyroid receptor-interacting protein 13</fullName>
        <shortName>TR-interacting protein 13</shortName>
        <shortName>TRIP-13</shortName>
    </alternativeName>
</protein>
<sequence>MDEAVGDLKQALPCVAEAPTVHVEVHQRSGSTAKKEDVKLNVRKLLNRHNIVFGDYTWTEFDEPFLTRNVQSVSIVDTELKVKDPQPIDLSTCTVALHVFQLNEGGPSSENLEEETENIIAANHWLLPAAEFHGLWDSLVYDAEVKSHLLDYVMTTLLFSDKNVDSNLITWNRVVLLHGPPGTGKTSLCKALAQKLTIRLSSRYRYGQLIEINSHSLFSKWFSESGKLVTRMFQMIQDLIDDKDALVFVLIDEVESLTAARNACRAGTEPSDAIRVVNAVLTQIDQIKRHSNVVILTTSNITERIDVAFVDRADIRQYVGPPSAAAIFKIYLSCLEELMKCQIIYPRQQLLTLRELEMIGFIENNVSKLSLLLSEISRKSEGLSGRVLRKLPFLAHALYIQAPTVTIEGFLQALSLAVDRQFEDRKKLSCV</sequence>
<comment type="function">
    <text evidence="2 3">Plays a key role in chromosome recombination and chromosome structure development during meiosis. Required at early steps in meiotic recombination that leads to non-crossovers pathways. Also needed for efficient completion of homologous synapsis by influencing crossover distribution along the chromosomes affecting both crossovers and non-crossovers pathways. Also required for development of higher-order chromosome structures and is needed for synaptonemal-complex formation. In males, required for efficient synapsis of the sex chromosomes and for sex body formation. Promotes early steps of the DNA double-strand breaks (DSBs) repair process upstream of the assembly of RAD51 complexes. Required for depletion of HORMAD1 and HORMAD2 from synapsed chromosomes. Plays a role in mitotic spindle assembly checkpoint (SAC) activation (By similarity).</text>
</comment>
<comment type="subunit">
    <text evidence="1 3">Specifically interacts with the ligand binding domain of the thyroid receptor (TR). This interaction does not require the presence of thyroid hormone for its interaction (By similarity). Interacts with proteasome subunit PSMA8; to participate in meiosis progression during spermatogenesis (By similarity).</text>
</comment>
<comment type="similarity">
    <text evidence="5">Belongs to the AAA ATPase family. PCH2 subfamily.</text>
</comment>
<feature type="chain" id="PRO_0000410922" description="Pachytene checkpoint protein 2 homolog">
    <location>
        <begin position="1"/>
        <end position="431"/>
    </location>
</feature>
<feature type="binding site" evidence="4">
    <location>
        <begin position="179"/>
        <end position="186"/>
    </location>
    <ligand>
        <name>ATP</name>
        <dbReference type="ChEBI" id="CHEBI:30616"/>
    </ligand>
</feature>
<feature type="modified residue" description="N-acetylmethionine" evidence="2">
    <location>
        <position position="1"/>
    </location>
</feature>
<dbReference type="EMBL" id="GU373695">
    <property type="protein sequence ID" value="ADC38895.1"/>
    <property type="molecule type" value="mRNA"/>
</dbReference>
<dbReference type="RefSeq" id="NP_001182300.1">
    <property type="nucleotide sequence ID" value="NM_001195371.1"/>
</dbReference>
<dbReference type="SMR" id="D3K5L7"/>
<dbReference type="FunCoup" id="D3K5L7">
    <property type="interactions" value="1281"/>
</dbReference>
<dbReference type="STRING" id="9823.ENSSSCP00000049396"/>
<dbReference type="GeneID" id="100337674"/>
<dbReference type="KEGG" id="ssc:100337674"/>
<dbReference type="CTD" id="9319"/>
<dbReference type="InParanoid" id="D3K5L7"/>
<dbReference type="OrthoDB" id="10042665at2759"/>
<dbReference type="Proteomes" id="UP000008227">
    <property type="component" value="Unplaced"/>
</dbReference>
<dbReference type="Proteomes" id="UP000314985">
    <property type="component" value="Unplaced"/>
</dbReference>
<dbReference type="Proteomes" id="UP000694570">
    <property type="component" value="Unplaced"/>
</dbReference>
<dbReference type="Proteomes" id="UP000694571">
    <property type="component" value="Unplaced"/>
</dbReference>
<dbReference type="Proteomes" id="UP000694720">
    <property type="component" value="Unplaced"/>
</dbReference>
<dbReference type="Proteomes" id="UP000694722">
    <property type="component" value="Unplaced"/>
</dbReference>
<dbReference type="Proteomes" id="UP000694723">
    <property type="component" value="Unplaced"/>
</dbReference>
<dbReference type="Proteomes" id="UP000694724">
    <property type="component" value="Unplaced"/>
</dbReference>
<dbReference type="Proteomes" id="UP000694725">
    <property type="component" value="Unplaced"/>
</dbReference>
<dbReference type="Proteomes" id="UP000694726">
    <property type="component" value="Unplaced"/>
</dbReference>
<dbReference type="Proteomes" id="UP000694727">
    <property type="component" value="Unplaced"/>
</dbReference>
<dbReference type="Proteomes" id="UP000694728">
    <property type="component" value="Unplaced"/>
</dbReference>
<dbReference type="GO" id="GO:0005694">
    <property type="term" value="C:chromosome"/>
    <property type="evidence" value="ECO:0000318"/>
    <property type="project" value="GO_Central"/>
</dbReference>
<dbReference type="GO" id="GO:0005634">
    <property type="term" value="C:nucleus"/>
    <property type="evidence" value="ECO:0000318"/>
    <property type="project" value="GO_Central"/>
</dbReference>
<dbReference type="GO" id="GO:0005524">
    <property type="term" value="F:ATP binding"/>
    <property type="evidence" value="ECO:0007669"/>
    <property type="project" value="UniProtKB-KW"/>
</dbReference>
<dbReference type="GO" id="GO:0016887">
    <property type="term" value="F:ATP hydrolysis activity"/>
    <property type="evidence" value="ECO:0007669"/>
    <property type="project" value="InterPro"/>
</dbReference>
<dbReference type="GO" id="GO:0006302">
    <property type="term" value="P:double-strand break repair"/>
    <property type="evidence" value="ECO:0000250"/>
    <property type="project" value="UniProtKB"/>
</dbReference>
<dbReference type="GO" id="GO:0051598">
    <property type="term" value="P:meiotic recombination checkpoint signaling"/>
    <property type="evidence" value="ECO:0000318"/>
    <property type="project" value="GO_Central"/>
</dbReference>
<dbReference type="GO" id="GO:0007094">
    <property type="term" value="P:mitotic spindle assembly checkpoint signaling"/>
    <property type="evidence" value="ECO:0000250"/>
    <property type="project" value="UniProtKB"/>
</dbReference>
<dbReference type="GO" id="GO:0048477">
    <property type="term" value="P:oogenesis"/>
    <property type="evidence" value="ECO:0000250"/>
    <property type="project" value="UniProtKB"/>
</dbReference>
<dbReference type="GO" id="GO:0007131">
    <property type="term" value="P:reciprocal meiotic recombination"/>
    <property type="evidence" value="ECO:0000250"/>
    <property type="project" value="UniProtKB"/>
</dbReference>
<dbReference type="GO" id="GO:0007283">
    <property type="term" value="P:spermatogenesis"/>
    <property type="evidence" value="ECO:0000250"/>
    <property type="project" value="UniProtKB"/>
</dbReference>
<dbReference type="GO" id="GO:0007130">
    <property type="term" value="P:synaptonemal complex assembly"/>
    <property type="evidence" value="ECO:0000250"/>
    <property type="project" value="UniProtKB"/>
</dbReference>
<dbReference type="CDD" id="cd19508">
    <property type="entry name" value="RecA-like_Pch2-like"/>
    <property type="match status" value="1"/>
</dbReference>
<dbReference type="FunFam" id="3.40.50.300:FF:000662">
    <property type="entry name" value="Pachytene checkpoint protein 2 homolog"/>
    <property type="match status" value="1"/>
</dbReference>
<dbReference type="Gene3D" id="3.40.50.300">
    <property type="entry name" value="P-loop containing nucleotide triphosphate hydrolases"/>
    <property type="match status" value="1"/>
</dbReference>
<dbReference type="InterPro" id="IPR003593">
    <property type="entry name" value="AAA+_ATPase"/>
</dbReference>
<dbReference type="InterPro" id="IPR003959">
    <property type="entry name" value="ATPase_AAA_core"/>
</dbReference>
<dbReference type="InterPro" id="IPR003960">
    <property type="entry name" value="ATPase_AAA_CS"/>
</dbReference>
<dbReference type="InterPro" id="IPR001270">
    <property type="entry name" value="ClpA/B"/>
</dbReference>
<dbReference type="InterPro" id="IPR027417">
    <property type="entry name" value="P-loop_NTPase"/>
</dbReference>
<dbReference type="InterPro" id="IPR044539">
    <property type="entry name" value="Pch2-like"/>
</dbReference>
<dbReference type="PANTHER" id="PTHR45991">
    <property type="entry name" value="PACHYTENE CHECKPOINT PROTEIN 2"/>
    <property type="match status" value="1"/>
</dbReference>
<dbReference type="PANTHER" id="PTHR45991:SF1">
    <property type="entry name" value="PACHYTENE CHECKPOINT PROTEIN 2 HOMOLOG"/>
    <property type="match status" value="1"/>
</dbReference>
<dbReference type="Pfam" id="PF00004">
    <property type="entry name" value="AAA"/>
    <property type="match status" value="1"/>
</dbReference>
<dbReference type="Pfam" id="PF23242">
    <property type="entry name" value="AAA_lid_TRIP13_C"/>
    <property type="match status" value="1"/>
</dbReference>
<dbReference type="Pfam" id="PF23563">
    <property type="entry name" value="TRIP13_N"/>
    <property type="match status" value="1"/>
</dbReference>
<dbReference type="PRINTS" id="PR00300">
    <property type="entry name" value="CLPPROTEASEA"/>
</dbReference>
<dbReference type="SMART" id="SM00382">
    <property type="entry name" value="AAA"/>
    <property type="match status" value="1"/>
</dbReference>
<dbReference type="SUPFAM" id="SSF52540">
    <property type="entry name" value="P-loop containing nucleoside triphosphate hydrolases"/>
    <property type="match status" value="1"/>
</dbReference>
<dbReference type="PROSITE" id="PS00674">
    <property type="entry name" value="AAA"/>
    <property type="match status" value="1"/>
</dbReference>
<keyword id="KW-0007">Acetylation</keyword>
<keyword id="KW-0067">ATP-binding</keyword>
<keyword id="KW-0221">Differentiation</keyword>
<keyword id="KW-0469">Meiosis</keyword>
<keyword id="KW-0547">Nucleotide-binding</keyword>
<keyword id="KW-0896">Oogenesis</keyword>
<keyword id="KW-1185">Reference proteome</keyword>
<keyword id="KW-0744">Spermatogenesis</keyword>
<proteinExistence type="evidence at transcript level"/>
<organism>
    <name type="scientific">Sus scrofa</name>
    <name type="common">Pig</name>
    <dbReference type="NCBI Taxonomy" id="9823"/>
    <lineage>
        <taxon>Eukaryota</taxon>
        <taxon>Metazoa</taxon>
        <taxon>Chordata</taxon>
        <taxon>Craniata</taxon>
        <taxon>Vertebrata</taxon>
        <taxon>Euteleostomi</taxon>
        <taxon>Mammalia</taxon>
        <taxon>Eutheria</taxon>
        <taxon>Laurasiatheria</taxon>
        <taxon>Artiodactyla</taxon>
        <taxon>Suina</taxon>
        <taxon>Suidae</taxon>
        <taxon>Sus</taxon>
    </lineage>
</organism>
<gene>
    <name type="primary">TRIP13</name>
    <name type="synonym">PCH2</name>
</gene>